<dbReference type="EC" id="2.7.8.7" evidence="1"/>
<dbReference type="EMBL" id="CP001154">
    <property type="protein sequence ID" value="ACO74458.1"/>
    <property type="molecule type" value="Genomic_DNA"/>
</dbReference>
<dbReference type="RefSeq" id="WP_012696944.1">
    <property type="nucleotide sequence ID" value="NC_012559.1"/>
</dbReference>
<dbReference type="SMR" id="C1D7L8"/>
<dbReference type="STRING" id="557598.LHK_01469"/>
<dbReference type="GeneID" id="75109771"/>
<dbReference type="KEGG" id="lhk:LHK_01469"/>
<dbReference type="eggNOG" id="COG0736">
    <property type="taxonomic scope" value="Bacteria"/>
</dbReference>
<dbReference type="HOGENOM" id="CLU_089696_3_1_4"/>
<dbReference type="Proteomes" id="UP000002010">
    <property type="component" value="Chromosome"/>
</dbReference>
<dbReference type="GO" id="GO:0005737">
    <property type="term" value="C:cytoplasm"/>
    <property type="evidence" value="ECO:0007669"/>
    <property type="project" value="UniProtKB-SubCell"/>
</dbReference>
<dbReference type="GO" id="GO:0008897">
    <property type="term" value="F:holo-[acyl-carrier-protein] synthase activity"/>
    <property type="evidence" value="ECO:0007669"/>
    <property type="project" value="UniProtKB-UniRule"/>
</dbReference>
<dbReference type="GO" id="GO:0000287">
    <property type="term" value="F:magnesium ion binding"/>
    <property type="evidence" value="ECO:0007669"/>
    <property type="project" value="UniProtKB-UniRule"/>
</dbReference>
<dbReference type="GO" id="GO:0006633">
    <property type="term" value="P:fatty acid biosynthetic process"/>
    <property type="evidence" value="ECO:0007669"/>
    <property type="project" value="UniProtKB-UniRule"/>
</dbReference>
<dbReference type="Gene3D" id="3.90.470.20">
    <property type="entry name" value="4'-phosphopantetheinyl transferase domain"/>
    <property type="match status" value="1"/>
</dbReference>
<dbReference type="HAMAP" id="MF_00101">
    <property type="entry name" value="AcpS"/>
    <property type="match status" value="1"/>
</dbReference>
<dbReference type="InterPro" id="IPR008278">
    <property type="entry name" value="4-PPantetheinyl_Trfase_dom"/>
</dbReference>
<dbReference type="InterPro" id="IPR037143">
    <property type="entry name" value="4-PPantetheinyl_Trfase_dom_sf"/>
</dbReference>
<dbReference type="InterPro" id="IPR002582">
    <property type="entry name" value="ACPS"/>
</dbReference>
<dbReference type="InterPro" id="IPR004568">
    <property type="entry name" value="Ppantetheine-prot_Trfase_dom"/>
</dbReference>
<dbReference type="NCBIfam" id="TIGR00516">
    <property type="entry name" value="acpS"/>
    <property type="match status" value="1"/>
</dbReference>
<dbReference type="NCBIfam" id="TIGR00556">
    <property type="entry name" value="pantethn_trn"/>
    <property type="match status" value="1"/>
</dbReference>
<dbReference type="Pfam" id="PF01648">
    <property type="entry name" value="ACPS"/>
    <property type="match status" value="1"/>
</dbReference>
<dbReference type="SUPFAM" id="SSF56214">
    <property type="entry name" value="4'-phosphopantetheinyl transferase"/>
    <property type="match status" value="1"/>
</dbReference>
<protein>
    <recommendedName>
        <fullName evidence="1">Holo-[acyl-carrier-protein] synthase</fullName>
        <shortName evidence="1">Holo-ACP synthase</shortName>
        <ecNumber evidence="1">2.7.8.7</ecNumber>
    </recommendedName>
    <alternativeName>
        <fullName evidence="1">4'-phosphopantetheinyl transferase AcpS</fullName>
    </alternativeName>
</protein>
<accession>C1D7L8</accession>
<sequence length="125" mass="13523">MIVGIGTDLAEVARFEQLLARHGQRVARRMLAAAELDEFARAADPARFLAKRFAAKEAFAKAAGTGVRAPVLLPAIAVTHDELGKPAFACSAVLHDWLTARGVQRMHVSISDERTHCLAFVVFEG</sequence>
<reference key="1">
    <citation type="journal article" date="2009" name="PLoS Genet.">
        <title>The complete genome and proteome of Laribacter hongkongensis reveal potential mechanisms for adaptations to different temperatures and habitats.</title>
        <authorList>
            <person name="Woo P.C.Y."/>
            <person name="Lau S.K.P."/>
            <person name="Tse H."/>
            <person name="Teng J.L.L."/>
            <person name="Curreem S.O."/>
            <person name="Tsang A.K.L."/>
            <person name="Fan R.Y.Y."/>
            <person name="Wong G.K.M."/>
            <person name="Huang Y."/>
            <person name="Loman N.J."/>
            <person name="Snyder L.A.S."/>
            <person name="Cai J.J."/>
            <person name="Huang J.-D."/>
            <person name="Mak W."/>
            <person name="Pallen M.J."/>
            <person name="Lok S."/>
            <person name="Yuen K.-Y."/>
        </authorList>
    </citation>
    <scope>NUCLEOTIDE SEQUENCE [LARGE SCALE GENOMIC DNA]</scope>
    <source>
        <strain>HLHK9</strain>
    </source>
</reference>
<keyword id="KW-0963">Cytoplasm</keyword>
<keyword id="KW-0275">Fatty acid biosynthesis</keyword>
<keyword id="KW-0276">Fatty acid metabolism</keyword>
<keyword id="KW-0444">Lipid biosynthesis</keyword>
<keyword id="KW-0443">Lipid metabolism</keyword>
<keyword id="KW-0460">Magnesium</keyword>
<keyword id="KW-0479">Metal-binding</keyword>
<keyword id="KW-1185">Reference proteome</keyword>
<keyword id="KW-0808">Transferase</keyword>
<evidence type="ECO:0000255" key="1">
    <source>
        <dbReference type="HAMAP-Rule" id="MF_00101"/>
    </source>
</evidence>
<comment type="function">
    <text evidence="1">Transfers the 4'-phosphopantetheine moiety from coenzyme A to a Ser of acyl-carrier-protein.</text>
</comment>
<comment type="catalytic activity">
    <reaction evidence="1">
        <text>apo-[ACP] + CoA = holo-[ACP] + adenosine 3',5'-bisphosphate + H(+)</text>
        <dbReference type="Rhea" id="RHEA:12068"/>
        <dbReference type="Rhea" id="RHEA-COMP:9685"/>
        <dbReference type="Rhea" id="RHEA-COMP:9690"/>
        <dbReference type="ChEBI" id="CHEBI:15378"/>
        <dbReference type="ChEBI" id="CHEBI:29999"/>
        <dbReference type="ChEBI" id="CHEBI:57287"/>
        <dbReference type="ChEBI" id="CHEBI:58343"/>
        <dbReference type="ChEBI" id="CHEBI:64479"/>
        <dbReference type="EC" id="2.7.8.7"/>
    </reaction>
</comment>
<comment type="cofactor">
    <cofactor evidence="1">
        <name>Mg(2+)</name>
        <dbReference type="ChEBI" id="CHEBI:18420"/>
    </cofactor>
</comment>
<comment type="subcellular location">
    <subcellularLocation>
        <location evidence="1">Cytoplasm</location>
    </subcellularLocation>
</comment>
<comment type="similarity">
    <text evidence="1">Belongs to the P-Pant transferase superfamily. AcpS family.</text>
</comment>
<name>ACPS_LARHH</name>
<feature type="chain" id="PRO_1000118812" description="Holo-[acyl-carrier-protein] synthase">
    <location>
        <begin position="1"/>
        <end position="125"/>
    </location>
</feature>
<feature type="binding site" evidence="1">
    <location>
        <position position="8"/>
    </location>
    <ligand>
        <name>Mg(2+)</name>
        <dbReference type="ChEBI" id="CHEBI:18420"/>
    </ligand>
</feature>
<feature type="binding site" evidence="1">
    <location>
        <position position="57"/>
    </location>
    <ligand>
        <name>Mg(2+)</name>
        <dbReference type="ChEBI" id="CHEBI:18420"/>
    </ligand>
</feature>
<proteinExistence type="inferred from homology"/>
<gene>
    <name evidence="1" type="primary">acpS</name>
    <name type="ordered locus">LHK_01469</name>
</gene>
<organism>
    <name type="scientific">Laribacter hongkongensis (strain HLHK9)</name>
    <dbReference type="NCBI Taxonomy" id="557598"/>
    <lineage>
        <taxon>Bacteria</taxon>
        <taxon>Pseudomonadati</taxon>
        <taxon>Pseudomonadota</taxon>
        <taxon>Betaproteobacteria</taxon>
        <taxon>Neisseriales</taxon>
        <taxon>Aquaspirillaceae</taxon>
        <taxon>Laribacter</taxon>
    </lineage>
</organism>